<feature type="chain" id="PRO_0000359921" description="Uncharacterized protein YwhH">
    <location>
        <begin position="1"/>
        <end position="157"/>
    </location>
</feature>
<gene>
    <name type="primary">ywhH</name>
    <name type="ordered locus">BSU37480</name>
</gene>
<proteinExistence type="predicted"/>
<reference key="1">
    <citation type="journal article" date="1997" name="Microbiology">
        <title>The Bacillus subtilis genome from gerBC (311 degrees) to licR (334 degrees).</title>
        <authorList>
            <person name="Presecan E."/>
            <person name="Moszer I."/>
            <person name="Boursier L."/>
            <person name="Cruz Ramos H."/>
            <person name="De La Fuente V."/>
            <person name="Hullo M.-F."/>
            <person name="Lelong C."/>
            <person name="Schleich S."/>
            <person name="Sekowska A."/>
            <person name="Song B.H."/>
            <person name="Villani G."/>
            <person name="Kunst F."/>
            <person name="Danchin A."/>
            <person name="Glaser P."/>
        </authorList>
    </citation>
    <scope>NUCLEOTIDE SEQUENCE [GENOMIC DNA]</scope>
    <source>
        <strain>168</strain>
    </source>
</reference>
<reference key="2">
    <citation type="journal article" date="1997" name="Nature">
        <title>The complete genome sequence of the Gram-positive bacterium Bacillus subtilis.</title>
        <authorList>
            <person name="Kunst F."/>
            <person name="Ogasawara N."/>
            <person name="Moszer I."/>
            <person name="Albertini A.M."/>
            <person name="Alloni G."/>
            <person name="Azevedo V."/>
            <person name="Bertero M.G."/>
            <person name="Bessieres P."/>
            <person name="Bolotin A."/>
            <person name="Borchert S."/>
            <person name="Borriss R."/>
            <person name="Boursier L."/>
            <person name="Brans A."/>
            <person name="Braun M."/>
            <person name="Brignell S.C."/>
            <person name="Bron S."/>
            <person name="Brouillet S."/>
            <person name="Bruschi C.V."/>
            <person name="Caldwell B."/>
            <person name="Capuano V."/>
            <person name="Carter N.M."/>
            <person name="Choi S.-K."/>
            <person name="Codani J.-J."/>
            <person name="Connerton I.F."/>
            <person name="Cummings N.J."/>
            <person name="Daniel R.A."/>
            <person name="Denizot F."/>
            <person name="Devine K.M."/>
            <person name="Duesterhoeft A."/>
            <person name="Ehrlich S.D."/>
            <person name="Emmerson P.T."/>
            <person name="Entian K.-D."/>
            <person name="Errington J."/>
            <person name="Fabret C."/>
            <person name="Ferrari E."/>
            <person name="Foulger D."/>
            <person name="Fritz C."/>
            <person name="Fujita M."/>
            <person name="Fujita Y."/>
            <person name="Fuma S."/>
            <person name="Galizzi A."/>
            <person name="Galleron N."/>
            <person name="Ghim S.-Y."/>
            <person name="Glaser P."/>
            <person name="Goffeau A."/>
            <person name="Golightly E.J."/>
            <person name="Grandi G."/>
            <person name="Guiseppi G."/>
            <person name="Guy B.J."/>
            <person name="Haga K."/>
            <person name="Haiech J."/>
            <person name="Harwood C.R."/>
            <person name="Henaut A."/>
            <person name="Hilbert H."/>
            <person name="Holsappel S."/>
            <person name="Hosono S."/>
            <person name="Hullo M.-F."/>
            <person name="Itaya M."/>
            <person name="Jones L.-M."/>
            <person name="Joris B."/>
            <person name="Karamata D."/>
            <person name="Kasahara Y."/>
            <person name="Klaerr-Blanchard M."/>
            <person name="Klein C."/>
            <person name="Kobayashi Y."/>
            <person name="Koetter P."/>
            <person name="Koningstein G."/>
            <person name="Krogh S."/>
            <person name="Kumano M."/>
            <person name="Kurita K."/>
            <person name="Lapidus A."/>
            <person name="Lardinois S."/>
            <person name="Lauber J."/>
            <person name="Lazarevic V."/>
            <person name="Lee S.-M."/>
            <person name="Levine A."/>
            <person name="Liu H."/>
            <person name="Masuda S."/>
            <person name="Mauel C."/>
            <person name="Medigue C."/>
            <person name="Medina N."/>
            <person name="Mellado R.P."/>
            <person name="Mizuno M."/>
            <person name="Moestl D."/>
            <person name="Nakai S."/>
            <person name="Noback M."/>
            <person name="Noone D."/>
            <person name="O'Reilly M."/>
            <person name="Ogawa K."/>
            <person name="Ogiwara A."/>
            <person name="Oudega B."/>
            <person name="Park S.-H."/>
            <person name="Parro V."/>
            <person name="Pohl T.M."/>
            <person name="Portetelle D."/>
            <person name="Porwollik S."/>
            <person name="Prescott A.M."/>
            <person name="Presecan E."/>
            <person name="Pujic P."/>
            <person name="Purnelle B."/>
            <person name="Rapoport G."/>
            <person name="Rey M."/>
            <person name="Reynolds S."/>
            <person name="Rieger M."/>
            <person name="Rivolta C."/>
            <person name="Rocha E."/>
            <person name="Roche B."/>
            <person name="Rose M."/>
            <person name="Sadaie Y."/>
            <person name="Sato T."/>
            <person name="Scanlan E."/>
            <person name="Schleich S."/>
            <person name="Schroeter R."/>
            <person name="Scoffone F."/>
            <person name="Sekiguchi J."/>
            <person name="Sekowska A."/>
            <person name="Seror S.J."/>
            <person name="Serror P."/>
            <person name="Shin B.-S."/>
            <person name="Soldo B."/>
            <person name="Sorokin A."/>
            <person name="Tacconi E."/>
            <person name="Takagi T."/>
            <person name="Takahashi H."/>
            <person name="Takemaru K."/>
            <person name="Takeuchi M."/>
            <person name="Tamakoshi A."/>
            <person name="Tanaka T."/>
            <person name="Terpstra P."/>
            <person name="Tognoni A."/>
            <person name="Tosato V."/>
            <person name="Uchiyama S."/>
            <person name="Vandenbol M."/>
            <person name="Vannier F."/>
            <person name="Vassarotti A."/>
            <person name="Viari A."/>
            <person name="Wambutt R."/>
            <person name="Wedler E."/>
            <person name="Wedler H."/>
            <person name="Weitzenegger T."/>
            <person name="Winters P."/>
            <person name="Wipat A."/>
            <person name="Yamamoto H."/>
            <person name="Yamane K."/>
            <person name="Yasumoto K."/>
            <person name="Yata K."/>
            <person name="Yoshida K."/>
            <person name="Yoshikawa H.-F."/>
            <person name="Zumstein E."/>
            <person name="Yoshikawa H."/>
            <person name="Danchin A."/>
        </authorList>
    </citation>
    <scope>NUCLEOTIDE SEQUENCE [LARGE SCALE GENOMIC DNA]</scope>
    <source>
        <strain>168</strain>
    </source>
</reference>
<protein>
    <recommendedName>
        <fullName>Uncharacterized protein YwhH</fullName>
    </recommendedName>
</protein>
<dbReference type="EMBL" id="Z80360">
    <property type="protein sequence ID" value="CAB02518.1"/>
    <property type="molecule type" value="Genomic_DNA"/>
</dbReference>
<dbReference type="EMBL" id="AL009126">
    <property type="protein sequence ID" value="CAB15775.1"/>
    <property type="molecule type" value="Genomic_DNA"/>
</dbReference>
<dbReference type="PIR" id="A70058">
    <property type="entry name" value="A70058"/>
</dbReference>
<dbReference type="RefSeq" id="NP_391628.1">
    <property type="nucleotide sequence ID" value="NC_000964.3"/>
</dbReference>
<dbReference type="RefSeq" id="WP_003227547.1">
    <property type="nucleotide sequence ID" value="NZ_OZ025638.1"/>
</dbReference>
<dbReference type="SMR" id="P71000"/>
<dbReference type="FunCoup" id="P71000">
    <property type="interactions" value="14"/>
</dbReference>
<dbReference type="STRING" id="224308.BSU37480"/>
<dbReference type="PaxDb" id="224308-BSU37480"/>
<dbReference type="EnsemblBacteria" id="CAB15775">
    <property type="protein sequence ID" value="CAB15775"/>
    <property type="gene ID" value="BSU_37480"/>
</dbReference>
<dbReference type="GeneID" id="937183"/>
<dbReference type="KEGG" id="bsu:BSU37480"/>
<dbReference type="PATRIC" id="fig|224308.179.peg.4059"/>
<dbReference type="eggNOG" id="COG2606">
    <property type="taxonomic scope" value="Bacteria"/>
</dbReference>
<dbReference type="InParanoid" id="P71000"/>
<dbReference type="OrthoDB" id="9798760at2"/>
<dbReference type="PhylomeDB" id="P71000"/>
<dbReference type="BioCyc" id="BSUB:BSU37480-MONOMER"/>
<dbReference type="Proteomes" id="UP000001570">
    <property type="component" value="Chromosome"/>
</dbReference>
<dbReference type="GO" id="GO:0002161">
    <property type="term" value="F:aminoacyl-tRNA deacylase activity"/>
    <property type="evidence" value="ECO:0007669"/>
    <property type="project" value="InterPro"/>
</dbReference>
<dbReference type="CDD" id="cd04333">
    <property type="entry name" value="ProX_deacylase"/>
    <property type="match status" value="1"/>
</dbReference>
<dbReference type="Gene3D" id="3.90.960.10">
    <property type="entry name" value="YbaK/aminoacyl-tRNA synthetase-associated domain"/>
    <property type="match status" value="1"/>
</dbReference>
<dbReference type="InterPro" id="IPR036754">
    <property type="entry name" value="YbaK/aa-tRNA-synt-asso_dom_sf"/>
</dbReference>
<dbReference type="InterPro" id="IPR007214">
    <property type="entry name" value="YbaK/aa-tRNA-synth-assoc-dom"/>
</dbReference>
<dbReference type="PANTHER" id="PTHR30411">
    <property type="entry name" value="CYTOPLASMIC PROTEIN"/>
    <property type="match status" value="1"/>
</dbReference>
<dbReference type="PANTHER" id="PTHR30411:SF1">
    <property type="entry name" value="CYTOPLASMIC PROTEIN"/>
    <property type="match status" value="1"/>
</dbReference>
<dbReference type="Pfam" id="PF04073">
    <property type="entry name" value="tRNA_edit"/>
    <property type="match status" value="1"/>
</dbReference>
<dbReference type="SUPFAM" id="SSF55826">
    <property type="entry name" value="YbaK/ProRS associated domain"/>
    <property type="match status" value="1"/>
</dbReference>
<sequence>MSLKSVRTHFTQWNRENDVTEFETSSATVEQAAETIGVSLSRIAKSLSFRGEGDQVILIVAAGDAKIDNKKSRQTFGFKARMLSPNEVLEQTGHEIGGVCPFGLAHDPEVYLDVSLKRFQTVFPACGSRNSAIELTPKELSEFSFSKVWIDVCKDWE</sequence>
<accession>P71000</accession>
<accession>Q794Z3</accession>
<name>YWHH_BACSU</name>
<organism>
    <name type="scientific">Bacillus subtilis (strain 168)</name>
    <dbReference type="NCBI Taxonomy" id="224308"/>
    <lineage>
        <taxon>Bacteria</taxon>
        <taxon>Bacillati</taxon>
        <taxon>Bacillota</taxon>
        <taxon>Bacilli</taxon>
        <taxon>Bacillales</taxon>
        <taxon>Bacillaceae</taxon>
        <taxon>Bacillus</taxon>
    </lineage>
</organism>
<keyword id="KW-1185">Reference proteome</keyword>